<feature type="chain" id="PRO_1000087229" description="Large ribosomal subunit protein uL23">
    <location>
        <begin position="1"/>
        <end position="100"/>
    </location>
</feature>
<dbReference type="EMBL" id="CP000931">
    <property type="protein sequence ID" value="ABZ78672.1"/>
    <property type="molecule type" value="Genomic_DNA"/>
</dbReference>
<dbReference type="RefSeq" id="WP_012279179.1">
    <property type="nucleotide sequence ID" value="NC_010334.1"/>
</dbReference>
<dbReference type="SMR" id="B0TM10"/>
<dbReference type="STRING" id="458817.Shal_4132"/>
<dbReference type="KEGG" id="shl:Shal_4132"/>
<dbReference type="eggNOG" id="COG0089">
    <property type="taxonomic scope" value="Bacteria"/>
</dbReference>
<dbReference type="HOGENOM" id="CLU_037562_3_1_6"/>
<dbReference type="OrthoDB" id="9793353at2"/>
<dbReference type="Proteomes" id="UP000001317">
    <property type="component" value="Chromosome"/>
</dbReference>
<dbReference type="GO" id="GO:1990904">
    <property type="term" value="C:ribonucleoprotein complex"/>
    <property type="evidence" value="ECO:0007669"/>
    <property type="project" value="UniProtKB-KW"/>
</dbReference>
<dbReference type="GO" id="GO:0005840">
    <property type="term" value="C:ribosome"/>
    <property type="evidence" value="ECO:0007669"/>
    <property type="project" value="UniProtKB-KW"/>
</dbReference>
<dbReference type="GO" id="GO:0019843">
    <property type="term" value="F:rRNA binding"/>
    <property type="evidence" value="ECO:0007669"/>
    <property type="project" value="UniProtKB-UniRule"/>
</dbReference>
<dbReference type="GO" id="GO:0003735">
    <property type="term" value="F:structural constituent of ribosome"/>
    <property type="evidence" value="ECO:0007669"/>
    <property type="project" value="InterPro"/>
</dbReference>
<dbReference type="GO" id="GO:0006412">
    <property type="term" value="P:translation"/>
    <property type="evidence" value="ECO:0007669"/>
    <property type="project" value="UniProtKB-UniRule"/>
</dbReference>
<dbReference type="FunFam" id="3.30.70.330:FF:000001">
    <property type="entry name" value="50S ribosomal protein L23"/>
    <property type="match status" value="1"/>
</dbReference>
<dbReference type="Gene3D" id="3.30.70.330">
    <property type="match status" value="1"/>
</dbReference>
<dbReference type="HAMAP" id="MF_01369_B">
    <property type="entry name" value="Ribosomal_uL23_B"/>
    <property type="match status" value="1"/>
</dbReference>
<dbReference type="InterPro" id="IPR012677">
    <property type="entry name" value="Nucleotide-bd_a/b_plait_sf"/>
</dbReference>
<dbReference type="InterPro" id="IPR013025">
    <property type="entry name" value="Ribosomal_uL23-like"/>
</dbReference>
<dbReference type="InterPro" id="IPR012678">
    <property type="entry name" value="Ribosomal_uL23/eL15/eS24_sf"/>
</dbReference>
<dbReference type="InterPro" id="IPR001014">
    <property type="entry name" value="Ribosomal_uL23_CS"/>
</dbReference>
<dbReference type="NCBIfam" id="NF004358">
    <property type="entry name" value="PRK05738.1-1"/>
    <property type="match status" value="1"/>
</dbReference>
<dbReference type="NCBIfam" id="NF004359">
    <property type="entry name" value="PRK05738.1-3"/>
    <property type="match status" value="1"/>
</dbReference>
<dbReference type="NCBIfam" id="NF004363">
    <property type="entry name" value="PRK05738.2-4"/>
    <property type="match status" value="1"/>
</dbReference>
<dbReference type="PANTHER" id="PTHR11620">
    <property type="entry name" value="60S RIBOSOMAL PROTEIN L23A"/>
    <property type="match status" value="1"/>
</dbReference>
<dbReference type="Pfam" id="PF00276">
    <property type="entry name" value="Ribosomal_L23"/>
    <property type="match status" value="1"/>
</dbReference>
<dbReference type="SUPFAM" id="SSF54189">
    <property type="entry name" value="Ribosomal proteins S24e, L23 and L15e"/>
    <property type="match status" value="1"/>
</dbReference>
<dbReference type="PROSITE" id="PS00050">
    <property type="entry name" value="RIBOSOMAL_L23"/>
    <property type="match status" value="1"/>
</dbReference>
<gene>
    <name evidence="1" type="primary">rplW</name>
    <name type="ordered locus">Shal_4132</name>
</gene>
<protein>
    <recommendedName>
        <fullName evidence="1">Large ribosomal subunit protein uL23</fullName>
    </recommendedName>
    <alternativeName>
        <fullName evidence="2">50S ribosomal protein L23</fullName>
    </alternativeName>
</protein>
<keyword id="KW-0687">Ribonucleoprotein</keyword>
<keyword id="KW-0689">Ribosomal protein</keyword>
<keyword id="KW-0694">RNA-binding</keyword>
<keyword id="KW-0699">rRNA-binding</keyword>
<comment type="function">
    <text evidence="1">One of the early assembly proteins it binds 23S rRNA. One of the proteins that surrounds the polypeptide exit tunnel on the outside of the ribosome. Forms the main docking site for trigger factor binding to the ribosome.</text>
</comment>
<comment type="subunit">
    <text evidence="1">Part of the 50S ribosomal subunit. Contacts protein L29, and trigger factor when it is bound to the ribosome.</text>
</comment>
<comment type="similarity">
    <text evidence="1">Belongs to the universal ribosomal protein uL23 family.</text>
</comment>
<organism>
    <name type="scientific">Shewanella halifaxensis (strain HAW-EB4)</name>
    <dbReference type="NCBI Taxonomy" id="458817"/>
    <lineage>
        <taxon>Bacteria</taxon>
        <taxon>Pseudomonadati</taxon>
        <taxon>Pseudomonadota</taxon>
        <taxon>Gammaproteobacteria</taxon>
        <taxon>Alteromonadales</taxon>
        <taxon>Shewanellaceae</taxon>
        <taxon>Shewanella</taxon>
    </lineage>
</organism>
<name>RL23_SHEHH</name>
<proteinExistence type="inferred from homology"/>
<accession>B0TM10</accession>
<reference key="1">
    <citation type="submission" date="2008-01" db="EMBL/GenBank/DDBJ databases">
        <title>Complete sequence of Shewanella halifaxensis HAW-EB4.</title>
        <authorList>
            <consortium name="US DOE Joint Genome Institute"/>
            <person name="Copeland A."/>
            <person name="Lucas S."/>
            <person name="Lapidus A."/>
            <person name="Glavina del Rio T."/>
            <person name="Dalin E."/>
            <person name="Tice H."/>
            <person name="Bruce D."/>
            <person name="Goodwin L."/>
            <person name="Pitluck S."/>
            <person name="Sims D."/>
            <person name="Brettin T."/>
            <person name="Detter J.C."/>
            <person name="Han C."/>
            <person name="Kuske C.R."/>
            <person name="Schmutz J."/>
            <person name="Larimer F."/>
            <person name="Land M."/>
            <person name="Hauser L."/>
            <person name="Kyrpides N."/>
            <person name="Kim E."/>
            <person name="Zhao J.-S."/>
            <person name="Richardson P."/>
        </authorList>
    </citation>
    <scope>NUCLEOTIDE SEQUENCE [LARGE SCALE GENOMIC DNA]</scope>
    <source>
        <strain>HAW-EB4</strain>
    </source>
</reference>
<sequence length="100" mass="10916">MISEERLLKVILAPHISEKSTVNAEKNNTVVFRVAIDATKAEVKAAVAQLFEVEVDSVRTLVNKGKTKRTGARTGRRSDWKKAYVTLAEGADIDFVGGAE</sequence>
<evidence type="ECO:0000255" key="1">
    <source>
        <dbReference type="HAMAP-Rule" id="MF_01369"/>
    </source>
</evidence>
<evidence type="ECO:0000305" key="2"/>